<protein>
    <recommendedName>
        <fullName evidence="2">Small ribosomal subunit protein uS9c</fullName>
    </recommendedName>
    <alternativeName>
        <fullName>30S ribosomal protein S9, chloroplastic</fullName>
    </alternativeName>
</protein>
<organism>
    <name type="scientific">Arabidopsis thaliana</name>
    <name type="common">Mouse-ear cress</name>
    <dbReference type="NCBI Taxonomy" id="3702"/>
    <lineage>
        <taxon>Eukaryota</taxon>
        <taxon>Viridiplantae</taxon>
        <taxon>Streptophyta</taxon>
        <taxon>Embryophyta</taxon>
        <taxon>Tracheophyta</taxon>
        <taxon>Spermatophyta</taxon>
        <taxon>Magnoliopsida</taxon>
        <taxon>eudicotyledons</taxon>
        <taxon>Gunneridae</taxon>
        <taxon>Pentapetalae</taxon>
        <taxon>rosids</taxon>
        <taxon>malvids</taxon>
        <taxon>Brassicales</taxon>
        <taxon>Brassicaceae</taxon>
        <taxon>Camelineae</taxon>
        <taxon>Arabidopsis</taxon>
    </lineage>
</organism>
<comment type="function">
    <text evidence="1">Binds directly to 16S ribosomal RNA.</text>
</comment>
<comment type="subcellular location">
    <subcellularLocation>
        <location>Plastid</location>
        <location>Chloroplast</location>
    </subcellularLocation>
</comment>
<comment type="similarity">
    <text evidence="3">Belongs to the universal ribosomal protein uS9 family.</text>
</comment>
<gene>
    <name type="primary">RPS9</name>
    <name type="ordered locus">At1g74970</name>
    <name type="ORF">F25A4.6</name>
</gene>
<name>RR9_ARATH</name>
<dbReference type="EMBL" id="AB022676">
    <property type="protein sequence ID" value="BAA82396.1"/>
    <property type="molecule type" value="mRNA"/>
</dbReference>
<dbReference type="EMBL" id="AC008263">
    <property type="protein sequence ID" value="AAD55279.1"/>
    <property type="molecule type" value="Genomic_DNA"/>
</dbReference>
<dbReference type="EMBL" id="CP002684">
    <property type="protein sequence ID" value="AEE35658.1"/>
    <property type="molecule type" value="Genomic_DNA"/>
</dbReference>
<dbReference type="EMBL" id="AF344318">
    <property type="protein sequence ID" value="AAK06869.1"/>
    <property type="molecule type" value="mRNA"/>
</dbReference>
<dbReference type="EMBL" id="AY045856">
    <property type="protein sequence ID" value="AAK76530.1"/>
    <property type="molecule type" value="mRNA"/>
</dbReference>
<dbReference type="EMBL" id="AY045600">
    <property type="protein sequence ID" value="AAK73958.1"/>
    <property type="molecule type" value="mRNA"/>
</dbReference>
<dbReference type="EMBL" id="AY091382">
    <property type="protein sequence ID" value="AAM14321.1"/>
    <property type="molecule type" value="mRNA"/>
</dbReference>
<dbReference type="EMBL" id="AY086419">
    <property type="protein sequence ID" value="AAM63421.1"/>
    <property type="molecule type" value="mRNA"/>
</dbReference>
<dbReference type="PIR" id="T52450">
    <property type="entry name" value="T52450"/>
</dbReference>
<dbReference type="RefSeq" id="NP_177635.1">
    <property type="nucleotide sequence ID" value="NM_106155.4"/>
</dbReference>
<dbReference type="SMR" id="Q9XJ27"/>
<dbReference type="BioGRID" id="29055">
    <property type="interactions" value="14"/>
</dbReference>
<dbReference type="FunCoup" id="Q9XJ27">
    <property type="interactions" value="929"/>
</dbReference>
<dbReference type="STRING" id="3702.Q9XJ27"/>
<dbReference type="iPTMnet" id="Q9XJ27"/>
<dbReference type="PaxDb" id="3702-AT1G74970.1"/>
<dbReference type="ProteomicsDB" id="228253"/>
<dbReference type="EnsemblPlants" id="AT1G74970.1">
    <property type="protein sequence ID" value="AT1G74970.1"/>
    <property type="gene ID" value="AT1G74970"/>
</dbReference>
<dbReference type="GeneID" id="843836"/>
<dbReference type="Gramene" id="AT1G74970.1">
    <property type="protein sequence ID" value="AT1G74970.1"/>
    <property type="gene ID" value="AT1G74970"/>
</dbReference>
<dbReference type="KEGG" id="ath:AT1G74970"/>
<dbReference type="Araport" id="AT1G74970"/>
<dbReference type="TAIR" id="AT1G74970">
    <property type="gene designation" value="RPS9"/>
</dbReference>
<dbReference type="eggNOG" id="KOG1697">
    <property type="taxonomic scope" value="Eukaryota"/>
</dbReference>
<dbReference type="HOGENOM" id="CLU_046483_1_0_1"/>
<dbReference type="InParanoid" id="Q9XJ27"/>
<dbReference type="OMA" id="INCRTAQ"/>
<dbReference type="OrthoDB" id="10254627at2759"/>
<dbReference type="PhylomeDB" id="Q9XJ27"/>
<dbReference type="PRO" id="PR:Q9XJ27"/>
<dbReference type="Proteomes" id="UP000006548">
    <property type="component" value="Chromosome 1"/>
</dbReference>
<dbReference type="ExpressionAtlas" id="Q9XJ27">
    <property type="expression patterns" value="baseline and differential"/>
</dbReference>
<dbReference type="GO" id="GO:0009507">
    <property type="term" value="C:chloroplast"/>
    <property type="evidence" value="ECO:0007005"/>
    <property type="project" value="TAIR"/>
</dbReference>
<dbReference type="GO" id="GO:0009941">
    <property type="term" value="C:chloroplast envelope"/>
    <property type="evidence" value="ECO:0007005"/>
    <property type="project" value="TAIR"/>
</dbReference>
<dbReference type="GO" id="GO:0009570">
    <property type="term" value="C:chloroplast stroma"/>
    <property type="evidence" value="ECO:0007005"/>
    <property type="project" value="TAIR"/>
</dbReference>
<dbReference type="GO" id="GO:0005739">
    <property type="term" value="C:mitochondrion"/>
    <property type="evidence" value="ECO:0007005"/>
    <property type="project" value="TAIR"/>
</dbReference>
<dbReference type="GO" id="GO:0000312">
    <property type="term" value="C:plastid small ribosomal subunit"/>
    <property type="evidence" value="ECO:0000314"/>
    <property type="project" value="TAIR"/>
</dbReference>
<dbReference type="GO" id="GO:0003729">
    <property type="term" value="F:mRNA binding"/>
    <property type="evidence" value="ECO:0000314"/>
    <property type="project" value="TAIR"/>
</dbReference>
<dbReference type="GO" id="GO:0019843">
    <property type="term" value="F:rRNA binding"/>
    <property type="evidence" value="ECO:0007669"/>
    <property type="project" value="UniProtKB-KW"/>
</dbReference>
<dbReference type="GO" id="GO:0003735">
    <property type="term" value="F:structural constituent of ribosome"/>
    <property type="evidence" value="ECO:0000250"/>
    <property type="project" value="TAIR"/>
</dbReference>
<dbReference type="GO" id="GO:0006412">
    <property type="term" value="P:translation"/>
    <property type="evidence" value="ECO:0000304"/>
    <property type="project" value="TAIR"/>
</dbReference>
<dbReference type="FunFam" id="3.30.230.10:FF:000001">
    <property type="entry name" value="30S ribosomal protein S9"/>
    <property type="match status" value="1"/>
</dbReference>
<dbReference type="Gene3D" id="3.30.230.10">
    <property type="match status" value="1"/>
</dbReference>
<dbReference type="HAMAP" id="MF_00532_B">
    <property type="entry name" value="Ribosomal_uS9_B"/>
    <property type="match status" value="1"/>
</dbReference>
<dbReference type="InterPro" id="IPR020568">
    <property type="entry name" value="Ribosomal_Su5_D2-typ_SF"/>
</dbReference>
<dbReference type="InterPro" id="IPR000754">
    <property type="entry name" value="Ribosomal_uS9"/>
</dbReference>
<dbReference type="InterPro" id="IPR023035">
    <property type="entry name" value="Ribosomal_uS9_bac/plastid"/>
</dbReference>
<dbReference type="InterPro" id="IPR020574">
    <property type="entry name" value="Ribosomal_uS9_CS"/>
</dbReference>
<dbReference type="InterPro" id="IPR014721">
    <property type="entry name" value="Ribsml_uS5_D2-typ_fold_subgr"/>
</dbReference>
<dbReference type="NCBIfam" id="NF001099">
    <property type="entry name" value="PRK00132.1"/>
    <property type="match status" value="1"/>
</dbReference>
<dbReference type="PANTHER" id="PTHR21569">
    <property type="entry name" value="RIBOSOMAL PROTEIN S9"/>
    <property type="match status" value="1"/>
</dbReference>
<dbReference type="PANTHER" id="PTHR21569:SF1">
    <property type="entry name" value="SMALL RIBOSOMAL SUBUNIT PROTEIN US9M"/>
    <property type="match status" value="1"/>
</dbReference>
<dbReference type="Pfam" id="PF00380">
    <property type="entry name" value="Ribosomal_S9"/>
    <property type="match status" value="1"/>
</dbReference>
<dbReference type="SUPFAM" id="SSF54211">
    <property type="entry name" value="Ribosomal protein S5 domain 2-like"/>
    <property type="match status" value="1"/>
</dbReference>
<dbReference type="PROSITE" id="PS00360">
    <property type="entry name" value="RIBOSOMAL_S9"/>
    <property type="match status" value="1"/>
</dbReference>
<feature type="transit peptide" description="Chloroplast" evidence="3">
    <location>
        <begin position="1"/>
        <end position="52"/>
    </location>
</feature>
<feature type="chain" id="PRO_0000030642" description="Small ribosomal subunit protein uS9c">
    <location>
        <begin position="53"/>
        <end position="208"/>
    </location>
</feature>
<proteinExistence type="evidence at transcript level"/>
<evidence type="ECO:0000250" key="1"/>
<evidence type="ECO:0000303" key="2">
    <source>
    </source>
</evidence>
<evidence type="ECO:0000305" key="3"/>
<keyword id="KW-0150">Chloroplast</keyword>
<keyword id="KW-0934">Plastid</keyword>
<keyword id="KW-1185">Reference proteome</keyword>
<keyword id="KW-0687">Ribonucleoprotein</keyword>
<keyword id="KW-0689">Ribosomal protein</keyword>
<keyword id="KW-0694">RNA-binding</keyword>
<keyword id="KW-0699">rRNA-binding</keyword>
<keyword id="KW-0809">Transit peptide</keyword>
<sequence>MASITNLASSLSSLSFSSQVSQRPNTISFPRANSVFALPAKSARRASLSITATVSAPPEEEEIVELKKYVKSRLPGGFAAQKIIGTGRRKCAIARVVLQEGTGKVIINYRDAKEYLQGNPLWLQYVKVPLVTLGYENSYDIFVKAHGGGLSGQAQAITLGVARALLKVSADHRSPLKKEGLLTRDARVVERKKAGLKKARKAPQFSKR</sequence>
<accession>Q9XJ27</accession>
<reference key="1">
    <citation type="journal article" date="1999" name="FEBS Lett.">
        <title>A novel plant nuclear gene encoding chloroplast ribosomal protein S9 has a transit peptide related to that of rice chloroplast ribosomal protein L12.</title>
        <authorList>
            <person name="Arimura S."/>
            <person name="Takusagawa S."/>
            <person name="Hatano S."/>
            <person name="Nakazono M."/>
            <person name="Hirai A."/>
            <person name="Tsutsumi N."/>
        </authorList>
    </citation>
    <scope>NUCLEOTIDE SEQUENCE [MRNA]</scope>
    <source>
        <strain>cv. Columbia</strain>
    </source>
</reference>
<reference key="2">
    <citation type="journal article" date="2000" name="Nature">
        <title>Sequence and analysis of chromosome 1 of the plant Arabidopsis thaliana.</title>
        <authorList>
            <person name="Theologis A."/>
            <person name="Ecker J.R."/>
            <person name="Palm C.J."/>
            <person name="Federspiel N.A."/>
            <person name="Kaul S."/>
            <person name="White O."/>
            <person name="Alonso J."/>
            <person name="Altafi H."/>
            <person name="Araujo R."/>
            <person name="Bowman C.L."/>
            <person name="Brooks S.Y."/>
            <person name="Buehler E."/>
            <person name="Chan A."/>
            <person name="Chao Q."/>
            <person name="Chen H."/>
            <person name="Cheuk R.F."/>
            <person name="Chin C.W."/>
            <person name="Chung M.K."/>
            <person name="Conn L."/>
            <person name="Conway A.B."/>
            <person name="Conway A.R."/>
            <person name="Creasy T.H."/>
            <person name="Dewar K."/>
            <person name="Dunn P."/>
            <person name="Etgu P."/>
            <person name="Feldblyum T.V."/>
            <person name="Feng J.-D."/>
            <person name="Fong B."/>
            <person name="Fujii C.Y."/>
            <person name="Gill J.E."/>
            <person name="Goldsmith A.D."/>
            <person name="Haas B."/>
            <person name="Hansen N.F."/>
            <person name="Hughes B."/>
            <person name="Huizar L."/>
            <person name="Hunter J.L."/>
            <person name="Jenkins J."/>
            <person name="Johnson-Hopson C."/>
            <person name="Khan S."/>
            <person name="Khaykin E."/>
            <person name="Kim C.J."/>
            <person name="Koo H.L."/>
            <person name="Kremenetskaia I."/>
            <person name="Kurtz D.B."/>
            <person name="Kwan A."/>
            <person name="Lam B."/>
            <person name="Langin-Hooper S."/>
            <person name="Lee A."/>
            <person name="Lee J.M."/>
            <person name="Lenz C.A."/>
            <person name="Li J.H."/>
            <person name="Li Y.-P."/>
            <person name="Lin X."/>
            <person name="Liu S.X."/>
            <person name="Liu Z.A."/>
            <person name="Luros J.S."/>
            <person name="Maiti R."/>
            <person name="Marziali A."/>
            <person name="Militscher J."/>
            <person name="Miranda M."/>
            <person name="Nguyen M."/>
            <person name="Nierman W.C."/>
            <person name="Osborne B.I."/>
            <person name="Pai G."/>
            <person name="Peterson J."/>
            <person name="Pham P.K."/>
            <person name="Rizzo M."/>
            <person name="Rooney T."/>
            <person name="Rowley D."/>
            <person name="Sakano H."/>
            <person name="Salzberg S.L."/>
            <person name="Schwartz J.R."/>
            <person name="Shinn P."/>
            <person name="Southwick A.M."/>
            <person name="Sun H."/>
            <person name="Tallon L.J."/>
            <person name="Tambunga G."/>
            <person name="Toriumi M.J."/>
            <person name="Town C.D."/>
            <person name="Utterback T."/>
            <person name="Van Aken S."/>
            <person name="Vaysberg M."/>
            <person name="Vysotskaia V.S."/>
            <person name="Walker M."/>
            <person name="Wu D."/>
            <person name="Yu G."/>
            <person name="Fraser C.M."/>
            <person name="Venter J.C."/>
            <person name="Davis R.W."/>
        </authorList>
    </citation>
    <scope>NUCLEOTIDE SEQUENCE [LARGE SCALE GENOMIC DNA]</scope>
    <source>
        <strain>cv. Columbia</strain>
    </source>
</reference>
<reference key="3">
    <citation type="journal article" date="2017" name="Plant J.">
        <title>Araport11: a complete reannotation of the Arabidopsis thaliana reference genome.</title>
        <authorList>
            <person name="Cheng C.Y."/>
            <person name="Krishnakumar V."/>
            <person name="Chan A.P."/>
            <person name="Thibaud-Nissen F."/>
            <person name="Schobel S."/>
            <person name="Town C.D."/>
        </authorList>
    </citation>
    <scope>GENOME REANNOTATION</scope>
    <source>
        <strain>cv. Columbia</strain>
    </source>
</reference>
<reference key="4">
    <citation type="journal article" date="2003" name="Science">
        <title>Empirical analysis of transcriptional activity in the Arabidopsis genome.</title>
        <authorList>
            <person name="Yamada K."/>
            <person name="Lim J."/>
            <person name="Dale J.M."/>
            <person name="Chen H."/>
            <person name="Shinn P."/>
            <person name="Palm C.J."/>
            <person name="Southwick A.M."/>
            <person name="Wu H.C."/>
            <person name="Kim C.J."/>
            <person name="Nguyen M."/>
            <person name="Pham P.K."/>
            <person name="Cheuk R.F."/>
            <person name="Karlin-Newmann G."/>
            <person name="Liu S.X."/>
            <person name="Lam B."/>
            <person name="Sakano H."/>
            <person name="Wu T."/>
            <person name="Yu G."/>
            <person name="Miranda M."/>
            <person name="Quach H.L."/>
            <person name="Tripp M."/>
            <person name="Chang C.H."/>
            <person name="Lee J.M."/>
            <person name="Toriumi M.J."/>
            <person name="Chan M.M."/>
            <person name="Tang C.C."/>
            <person name="Onodera C.S."/>
            <person name="Deng J.M."/>
            <person name="Akiyama K."/>
            <person name="Ansari Y."/>
            <person name="Arakawa T."/>
            <person name="Banh J."/>
            <person name="Banno F."/>
            <person name="Bowser L."/>
            <person name="Brooks S.Y."/>
            <person name="Carninci P."/>
            <person name="Chao Q."/>
            <person name="Choy N."/>
            <person name="Enju A."/>
            <person name="Goldsmith A.D."/>
            <person name="Gurjal M."/>
            <person name="Hansen N.F."/>
            <person name="Hayashizaki Y."/>
            <person name="Johnson-Hopson C."/>
            <person name="Hsuan V.W."/>
            <person name="Iida K."/>
            <person name="Karnes M."/>
            <person name="Khan S."/>
            <person name="Koesema E."/>
            <person name="Ishida J."/>
            <person name="Jiang P.X."/>
            <person name="Jones T."/>
            <person name="Kawai J."/>
            <person name="Kamiya A."/>
            <person name="Meyers C."/>
            <person name="Nakajima M."/>
            <person name="Narusaka M."/>
            <person name="Seki M."/>
            <person name="Sakurai T."/>
            <person name="Satou M."/>
            <person name="Tamse R."/>
            <person name="Vaysberg M."/>
            <person name="Wallender E.K."/>
            <person name="Wong C."/>
            <person name="Yamamura Y."/>
            <person name="Yuan S."/>
            <person name="Shinozaki K."/>
            <person name="Davis R.W."/>
            <person name="Theologis A."/>
            <person name="Ecker J.R."/>
        </authorList>
    </citation>
    <scope>NUCLEOTIDE SEQUENCE [LARGE SCALE MRNA]</scope>
    <source>
        <strain>cv. Columbia</strain>
    </source>
</reference>
<reference key="5">
    <citation type="submission" date="2002-03" db="EMBL/GenBank/DDBJ databases">
        <title>Full-length cDNA from Arabidopsis thaliana.</title>
        <authorList>
            <person name="Brover V.V."/>
            <person name="Troukhan M.E."/>
            <person name="Alexandrov N.A."/>
            <person name="Lu Y.-P."/>
            <person name="Flavell R.B."/>
            <person name="Feldmann K.A."/>
        </authorList>
    </citation>
    <scope>NUCLEOTIDE SEQUENCE [LARGE SCALE MRNA]</scope>
</reference>
<reference key="6">
    <citation type="journal article" date="2023" name="Plant Cell">
        <title>An updated nomenclature for plant ribosomal protein genes.</title>
        <authorList>
            <person name="Scarpin M.R."/>
            <person name="Busche M."/>
            <person name="Martinez R.E."/>
            <person name="Harper L.C."/>
            <person name="Reiser L."/>
            <person name="Szakonyi D."/>
            <person name="Merchante C."/>
            <person name="Lan T."/>
            <person name="Xiong W."/>
            <person name="Mo B."/>
            <person name="Tang G."/>
            <person name="Chen X."/>
            <person name="Bailey-Serres J."/>
            <person name="Browning K.S."/>
            <person name="Brunkard J.O."/>
        </authorList>
    </citation>
    <scope>NOMENCLATURE</scope>
</reference>